<dbReference type="EC" id="6.3.3.1" evidence="1"/>
<dbReference type="EMBL" id="CP001104">
    <property type="protein sequence ID" value="ACR71562.1"/>
    <property type="molecule type" value="Genomic_DNA"/>
</dbReference>
<dbReference type="RefSeq" id="WP_012738798.1">
    <property type="nucleotide sequence ID" value="NC_012778.1"/>
</dbReference>
<dbReference type="SMR" id="C4Z478"/>
<dbReference type="STRING" id="515620.EUBELI_00549"/>
<dbReference type="GeneID" id="41355308"/>
<dbReference type="KEGG" id="eel:EUBELI_00549"/>
<dbReference type="eggNOG" id="COG0150">
    <property type="taxonomic scope" value="Bacteria"/>
</dbReference>
<dbReference type="HOGENOM" id="CLU_047116_0_0_9"/>
<dbReference type="UniPathway" id="UPA00074">
    <property type="reaction ID" value="UER00129"/>
</dbReference>
<dbReference type="Proteomes" id="UP000001476">
    <property type="component" value="Chromosome"/>
</dbReference>
<dbReference type="GO" id="GO:0005829">
    <property type="term" value="C:cytosol"/>
    <property type="evidence" value="ECO:0007669"/>
    <property type="project" value="TreeGrafter"/>
</dbReference>
<dbReference type="GO" id="GO:0005524">
    <property type="term" value="F:ATP binding"/>
    <property type="evidence" value="ECO:0007669"/>
    <property type="project" value="UniProtKB-KW"/>
</dbReference>
<dbReference type="GO" id="GO:0004637">
    <property type="term" value="F:phosphoribosylamine-glycine ligase activity"/>
    <property type="evidence" value="ECO:0007669"/>
    <property type="project" value="TreeGrafter"/>
</dbReference>
<dbReference type="GO" id="GO:0004641">
    <property type="term" value="F:phosphoribosylformylglycinamidine cyclo-ligase activity"/>
    <property type="evidence" value="ECO:0007669"/>
    <property type="project" value="UniProtKB-UniRule"/>
</dbReference>
<dbReference type="GO" id="GO:0006189">
    <property type="term" value="P:'de novo' IMP biosynthetic process"/>
    <property type="evidence" value="ECO:0007669"/>
    <property type="project" value="UniProtKB-UniRule"/>
</dbReference>
<dbReference type="GO" id="GO:0046084">
    <property type="term" value="P:adenine biosynthetic process"/>
    <property type="evidence" value="ECO:0007669"/>
    <property type="project" value="TreeGrafter"/>
</dbReference>
<dbReference type="CDD" id="cd02196">
    <property type="entry name" value="PurM"/>
    <property type="match status" value="1"/>
</dbReference>
<dbReference type="FunFam" id="3.30.1330.10:FF:000001">
    <property type="entry name" value="Phosphoribosylformylglycinamidine cyclo-ligase"/>
    <property type="match status" value="1"/>
</dbReference>
<dbReference type="FunFam" id="3.90.650.10:FF:000001">
    <property type="entry name" value="Phosphoribosylformylglycinamidine cyclo-ligase"/>
    <property type="match status" value="1"/>
</dbReference>
<dbReference type="Gene3D" id="3.90.650.10">
    <property type="entry name" value="PurM-like C-terminal domain"/>
    <property type="match status" value="1"/>
</dbReference>
<dbReference type="Gene3D" id="3.30.1330.10">
    <property type="entry name" value="PurM-like, N-terminal domain"/>
    <property type="match status" value="1"/>
</dbReference>
<dbReference type="HAMAP" id="MF_00741">
    <property type="entry name" value="AIRS"/>
    <property type="match status" value="1"/>
</dbReference>
<dbReference type="InterPro" id="IPR010918">
    <property type="entry name" value="PurM-like_C_dom"/>
</dbReference>
<dbReference type="InterPro" id="IPR036676">
    <property type="entry name" value="PurM-like_C_sf"/>
</dbReference>
<dbReference type="InterPro" id="IPR016188">
    <property type="entry name" value="PurM-like_N"/>
</dbReference>
<dbReference type="InterPro" id="IPR036921">
    <property type="entry name" value="PurM-like_N_sf"/>
</dbReference>
<dbReference type="InterPro" id="IPR004733">
    <property type="entry name" value="PurM_cligase"/>
</dbReference>
<dbReference type="NCBIfam" id="TIGR00878">
    <property type="entry name" value="purM"/>
    <property type="match status" value="1"/>
</dbReference>
<dbReference type="PANTHER" id="PTHR10520:SF12">
    <property type="entry name" value="TRIFUNCTIONAL PURINE BIOSYNTHETIC PROTEIN ADENOSINE-3"/>
    <property type="match status" value="1"/>
</dbReference>
<dbReference type="PANTHER" id="PTHR10520">
    <property type="entry name" value="TRIFUNCTIONAL PURINE BIOSYNTHETIC PROTEIN ADENOSINE-3-RELATED"/>
    <property type="match status" value="1"/>
</dbReference>
<dbReference type="Pfam" id="PF00586">
    <property type="entry name" value="AIRS"/>
    <property type="match status" value="1"/>
</dbReference>
<dbReference type="Pfam" id="PF02769">
    <property type="entry name" value="AIRS_C"/>
    <property type="match status" value="1"/>
</dbReference>
<dbReference type="SUPFAM" id="SSF56042">
    <property type="entry name" value="PurM C-terminal domain-like"/>
    <property type="match status" value="1"/>
</dbReference>
<dbReference type="SUPFAM" id="SSF55326">
    <property type="entry name" value="PurM N-terminal domain-like"/>
    <property type="match status" value="1"/>
</dbReference>
<gene>
    <name evidence="1" type="primary">purM</name>
    <name type="ordered locus">EUBELI_00549</name>
</gene>
<name>PUR5_LACE2</name>
<evidence type="ECO:0000255" key="1">
    <source>
        <dbReference type="HAMAP-Rule" id="MF_00741"/>
    </source>
</evidence>
<accession>C4Z478</accession>
<proteinExistence type="inferred from homology"/>
<comment type="catalytic activity">
    <reaction evidence="1">
        <text>2-formamido-N(1)-(5-O-phospho-beta-D-ribosyl)acetamidine + ATP = 5-amino-1-(5-phospho-beta-D-ribosyl)imidazole + ADP + phosphate + H(+)</text>
        <dbReference type="Rhea" id="RHEA:23032"/>
        <dbReference type="ChEBI" id="CHEBI:15378"/>
        <dbReference type="ChEBI" id="CHEBI:30616"/>
        <dbReference type="ChEBI" id="CHEBI:43474"/>
        <dbReference type="ChEBI" id="CHEBI:137981"/>
        <dbReference type="ChEBI" id="CHEBI:147287"/>
        <dbReference type="ChEBI" id="CHEBI:456216"/>
        <dbReference type="EC" id="6.3.3.1"/>
    </reaction>
</comment>
<comment type="pathway">
    <text evidence="1">Purine metabolism; IMP biosynthesis via de novo pathway; 5-amino-1-(5-phospho-D-ribosyl)imidazole from N(2)-formyl-N(1)-(5-phospho-D-ribosyl)glycinamide: step 2/2.</text>
</comment>
<comment type="subcellular location">
    <subcellularLocation>
        <location evidence="1">Cytoplasm</location>
    </subcellularLocation>
</comment>
<comment type="similarity">
    <text evidence="1">Belongs to the AIR synthase family.</text>
</comment>
<reference key="1">
    <citation type="journal article" date="2009" name="Proc. Natl. Acad. Sci. U.S.A.">
        <title>Characterizing a model human gut microbiota composed of members of its two dominant bacterial phyla.</title>
        <authorList>
            <person name="Mahowald M.A."/>
            <person name="Rey F.E."/>
            <person name="Seedorf H."/>
            <person name="Turnbaugh P.J."/>
            <person name="Fulton R.S."/>
            <person name="Wollam A."/>
            <person name="Shah N."/>
            <person name="Wang C."/>
            <person name="Magrini V."/>
            <person name="Wilson R.K."/>
            <person name="Cantarel B.L."/>
            <person name="Coutinho P.M."/>
            <person name="Henrissat B."/>
            <person name="Crock L.W."/>
            <person name="Russell A."/>
            <person name="Verberkmoes N.C."/>
            <person name="Hettich R.L."/>
            <person name="Gordon J.I."/>
        </authorList>
    </citation>
    <scope>NUCLEOTIDE SEQUENCE [LARGE SCALE GENOMIC DNA]</scope>
    <source>
        <strain>ATCC 27750 / DSM 3376 / VPI C15-48 / C15-B4</strain>
    </source>
</reference>
<protein>
    <recommendedName>
        <fullName evidence="1">Phosphoribosylformylglycinamidine cyclo-ligase</fullName>
        <ecNumber evidence="1">6.3.3.1</ecNumber>
    </recommendedName>
    <alternativeName>
        <fullName evidence="1">AIR synthase</fullName>
    </alternativeName>
    <alternativeName>
        <fullName evidence="1">AIRS</fullName>
    </alternativeName>
    <alternativeName>
        <fullName evidence="1">Phosphoribosyl-aminoimidazole synthetase</fullName>
    </alternativeName>
</protein>
<keyword id="KW-0067">ATP-binding</keyword>
<keyword id="KW-0963">Cytoplasm</keyword>
<keyword id="KW-0436">Ligase</keyword>
<keyword id="KW-0547">Nucleotide-binding</keyword>
<keyword id="KW-0658">Purine biosynthesis</keyword>
<keyword id="KW-1185">Reference proteome</keyword>
<sequence length="341" mass="36215">MDYKKSGVDIEAGYKSVELMKEAVKSTMREEVLGGIGGFSGAFSLAKIKEMEEPVLLSGTDGCGTKVKLAFIMDKHDTIGIDAVAMCVNDVVCAGGEPLFFLDYIACGKNYPEKIATIVGGVAEGCRQSECALIGGETAEHPGLMPQDEYDLAGFAVGVVDKKDLITGENIKPGDTLIGIASSGVHSNGFSLVRSVFTMTEESLNTYYDSLGKTLGEALLAPTKIYVKTMKEIKKAGVKVKGCSHITGGGFYENVPRMLPDGVKAVIKKDSYEVPPIFKMLAEDGNIEEHMMYNTFNMGIGLVLAVDPADVDTVMEAVKAAGETPYVIGSIEAGEKGVTLC</sequence>
<organism>
    <name type="scientific">Lachnospira eligens (strain ATCC 27750 / DSM 3376 / VPI C15-48 / C15-B4)</name>
    <name type="common">Eubacterium eligens</name>
    <dbReference type="NCBI Taxonomy" id="515620"/>
    <lineage>
        <taxon>Bacteria</taxon>
        <taxon>Bacillati</taxon>
        <taxon>Bacillota</taxon>
        <taxon>Clostridia</taxon>
        <taxon>Lachnospirales</taxon>
        <taxon>Lachnospiraceae</taxon>
        <taxon>Lachnospira</taxon>
    </lineage>
</organism>
<feature type="chain" id="PRO_1000212820" description="Phosphoribosylformylglycinamidine cyclo-ligase">
    <location>
        <begin position="1"/>
        <end position="341"/>
    </location>
</feature>